<reference key="1">
    <citation type="journal article" date="1998" name="J. Bacteriol.">
        <title>Cloning of genes coding for the three subunits of thiocyanate hydrolase of Thiobacillus thioparus THI 115 and their evolutionary relationships to nitrile hydratase.</title>
        <authorList>
            <person name="Katayama Y."/>
            <person name="Matsushita Y."/>
            <person name="Kaneko M."/>
            <person name="Kondo M."/>
            <person name="Mizuno T."/>
            <person name="Nyunoya H."/>
        </authorList>
    </citation>
    <scope>NUCLEOTIDE SEQUENCE [GENOMIC DNA]</scope>
    <scope>PROTEIN SEQUENCE OF 2-22</scope>
    <source>
        <strain>THI 115</strain>
    </source>
</reference>
<reference key="2">
    <citation type="journal article" date="1992" name="J. Biol. Chem.">
        <title>A thiocyanate hydrolase of Thiobacillus thioparus. A novel enzyme catalyzing the formation of carbonyl sulfide from thiocyanate.</title>
        <authorList>
            <person name="Katayama Y."/>
            <person name="Narahara Y."/>
            <person name="Inoue Y."/>
            <person name="Amano F."/>
            <person name="Kanagawa T."/>
            <person name="Kuraishi H."/>
        </authorList>
    </citation>
    <scope>CHARACTERIZATION</scope>
    <source>
        <strain>THI 115</strain>
    </source>
</reference>
<reference key="3">
    <citation type="journal article" date="2006" name="FEBS Lett.">
        <title>Functional expression of thiocyanate hydrolase is promoted by its activator protein, P15K.</title>
        <authorList>
            <person name="Kataoka S."/>
            <person name="Arakawa T."/>
            <person name="Hori S."/>
            <person name="Katayama Y."/>
            <person name="Hara Y."/>
            <person name="Matsushita Y."/>
            <person name="Nakayama H."/>
            <person name="Yohda M."/>
            <person name="Nyunoya H."/>
            <person name="Dohmae N."/>
            <person name="Maeda M."/>
            <person name="Odaka M."/>
        </authorList>
    </citation>
    <scope>COFACTOR</scope>
    <scope>IDENTIFICATION BY MASS SPECTROMETRY</scope>
    <scope>OXIDATION AT CYS-131 AND CYS-133</scope>
    <scope>SUBUNIT</scope>
</reference>
<reference key="4">
    <citation type="journal article" date="2006" name="J. Am. Chem. Soc.">
        <title>Thiocyanate hydrolase is a cobalt-containing metalloenzyme with a cysteine-sulfinic acid ligand.</title>
        <authorList>
            <person name="Katayama Y."/>
            <person name="Hashimoto K."/>
            <person name="Nakayama H."/>
            <person name="Mino H."/>
            <person name="Nojiri M."/>
            <person name="Ono T.A."/>
            <person name="Nyunoya H."/>
            <person name="Yohda M."/>
            <person name="Takio K."/>
            <person name="Odaka M."/>
        </authorList>
    </citation>
    <scope>COFACTOR</scope>
    <scope>IDENTIFICATION BY MASS SPECTROMETRY</scope>
    <scope>OXIDATION AT CYS-131</scope>
</reference>
<reference key="5">
    <citation type="journal article" date="2007" name="J. Mol. Biol.">
        <title>Structure of thiocyanate hydrolase: a new nitrile hydratase family protein with a novel five-coordinate cobalt(III) center.</title>
        <authorList>
            <person name="Arakawa T."/>
            <person name="Kawano Y."/>
            <person name="Kataoka S."/>
            <person name="Katayama Y."/>
            <person name="Kamiya N."/>
            <person name="Yohda M."/>
            <person name="Odaka M."/>
        </authorList>
    </citation>
    <scope>X-RAY CRYSTALLOGRAPHY (1.9 ANGSTROMS) IN COMPLEX WITH COBALT IONS; SCNA AND SCNB</scope>
    <scope>OXIDATION AT CYS-131 AND CYS-133</scope>
    <scope>SUBUNIT</scope>
</reference>
<organism>
    <name type="scientific">Thiobacillus thioparus</name>
    <dbReference type="NCBI Taxonomy" id="931"/>
    <lineage>
        <taxon>Bacteria</taxon>
        <taxon>Pseudomonadati</taxon>
        <taxon>Pseudomonadota</taxon>
        <taxon>Betaproteobacteria</taxon>
        <taxon>Nitrosomonadales</taxon>
        <taxon>Thiobacillaceae</taxon>
        <taxon>Thiobacillus</taxon>
    </lineage>
</organism>
<proteinExistence type="evidence at protein level"/>
<dbReference type="EC" id="3.5.5.8"/>
<dbReference type="EMBL" id="AB007989">
    <property type="protein sequence ID" value="BAA28288.1"/>
    <property type="molecule type" value="Genomic_DNA"/>
</dbReference>
<dbReference type="PDB" id="2DD4">
    <property type="method" value="X-ray"/>
    <property type="resolution" value="2.06 A"/>
    <property type="chains" value="C/F/I/L=1-243"/>
</dbReference>
<dbReference type="PDB" id="2DD5">
    <property type="method" value="X-ray"/>
    <property type="resolution" value="2.00 A"/>
    <property type="chains" value="C/F/I/L=1-243"/>
</dbReference>
<dbReference type="PDB" id="2DXB">
    <property type="method" value="X-ray"/>
    <property type="resolution" value="2.25 A"/>
    <property type="chains" value="C/F/I/L/O/R/U/X=1-243"/>
</dbReference>
<dbReference type="PDB" id="2DXC">
    <property type="method" value="X-ray"/>
    <property type="resolution" value="1.90 A"/>
    <property type="chains" value="C/F/I/L=1-243"/>
</dbReference>
<dbReference type="PDB" id="2ZZD">
    <property type="method" value="X-ray"/>
    <property type="resolution" value="1.78 A"/>
    <property type="chains" value="C/F/I/L=1-243"/>
</dbReference>
<dbReference type="PDB" id="3VYG">
    <property type="method" value="X-ray"/>
    <property type="resolution" value="1.72 A"/>
    <property type="chains" value="C/F/I/L=1-243"/>
</dbReference>
<dbReference type="PDBsum" id="2DD4"/>
<dbReference type="PDBsum" id="2DD5"/>
<dbReference type="PDBsum" id="2DXB"/>
<dbReference type="PDBsum" id="2DXC"/>
<dbReference type="PDBsum" id="2ZZD"/>
<dbReference type="PDBsum" id="3VYG"/>
<dbReference type="SMR" id="O66188"/>
<dbReference type="KEGG" id="ag:BAA28288"/>
<dbReference type="BioCyc" id="MetaCyc:MONOMER-2147"/>
<dbReference type="BRENDA" id="3.5.5.8">
    <property type="organism ID" value="6354"/>
</dbReference>
<dbReference type="UniPathway" id="UPA00366"/>
<dbReference type="EvolutionaryTrace" id="O66188"/>
<dbReference type="GO" id="GO:0018760">
    <property type="term" value="F:thiocyanate hydrolase activity"/>
    <property type="evidence" value="ECO:0007669"/>
    <property type="project" value="UniProtKB-EC"/>
</dbReference>
<dbReference type="GO" id="GO:0046914">
    <property type="term" value="F:transition metal ion binding"/>
    <property type="evidence" value="ECO:0007669"/>
    <property type="project" value="InterPro"/>
</dbReference>
<dbReference type="GO" id="GO:0046265">
    <property type="term" value="P:thiocyanate catabolic process"/>
    <property type="evidence" value="ECO:0007669"/>
    <property type="project" value="UniProtKB-UniPathway"/>
</dbReference>
<dbReference type="Gene3D" id="3.90.330.10">
    <property type="entry name" value="Nitrile hydratase alpha /Thiocyanate hydrolase gamma"/>
    <property type="match status" value="1"/>
</dbReference>
<dbReference type="InterPro" id="IPR036648">
    <property type="entry name" value="CN_Hdrase_a/SCN_Hdrase_g_sf"/>
</dbReference>
<dbReference type="InterPro" id="IPR004232">
    <property type="entry name" value="CN_Hdrtase_a/SCN_Hdrlase_g"/>
</dbReference>
<dbReference type="InterPro" id="IPR023900">
    <property type="entry name" value="CN_Hdrtase_asu/SCN_Hdrlase_gsu"/>
</dbReference>
<dbReference type="InterPro" id="IPR023901">
    <property type="entry name" value="Thiocyan_Hydrolase_gsu"/>
</dbReference>
<dbReference type="NCBIfam" id="TIGR03887">
    <property type="entry name" value="thiocyan_alph"/>
    <property type="match status" value="1"/>
</dbReference>
<dbReference type="Pfam" id="PF02979">
    <property type="entry name" value="NHase_alpha"/>
    <property type="match status" value="1"/>
</dbReference>
<dbReference type="PIRSF" id="PIRSF001426">
    <property type="entry name" value="NHase_alpha"/>
    <property type="match status" value="1"/>
</dbReference>
<dbReference type="SUPFAM" id="SSF56209">
    <property type="entry name" value="Nitrile hydratase alpha chain"/>
    <property type="match status" value="1"/>
</dbReference>
<accession>O66188</accession>
<name>SCNC_THITI</name>
<protein>
    <recommendedName>
        <fullName>Thiocyanate hydrolase subunit gamma</fullName>
        <ecNumber>3.5.5.8</ecNumber>
    </recommendedName>
</protein>
<evidence type="ECO:0000269" key="1">
    <source>
    </source>
</evidence>
<evidence type="ECO:0000269" key="2">
    <source>
    </source>
</evidence>
<evidence type="ECO:0000269" key="3">
    <source>
    </source>
</evidence>
<evidence type="ECO:0000269" key="4">
    <source>
    </source>
</evidence>
<evidence type="ECO:0000305" key="5"/>
<evidence type="ECO:0007744" key="6">
    <source>
        <dbReference type="PDB" id="2DD5"/>
    </source>
</evidence>
<evidence type="ECO:0007829" key="7">
    <source>
        <dbReference type="PDB" id="3VYG"/>
    </source>
</evidence>
<keyword id="KW-0002">3D-structure</keyword>
<keyword id="KW-0170">Cobalt</keyword>
<keyword id="KW-0903">Direct protein sequencing</keyword>
<keyword id="KW-0378">Hydrolase</keyword>
<keyword id="KW-0479">Metal-binding</keyword>
<keyword id="KW-0558">Oxidation</keyword>
<comment type="function">
    <text>Involved in the degradation of thiocyanate.</text>
</comment>
<comment type="catalytic activity">
    <reaction>
        <text>thiocyanate + H2O + 2 H(+) = carbonyl sulfide + NH4(+)</text>
        <dbReference type="Rhea" id="RHEA:21464"/>
        <dbReference type="ChEBI" id="CHEBI:15377"/>
        <dbReference type="ChEBI" id="CHEBI:15378"/>
        <dbReference type="ChEBI" id="CHEBI:16573"/>
        <dbReference type="ChEBI" id="CHEBI:18022"/>
        <dbReference type="ChEBI" id="CHEBI:28938"/>
        <dbReference type="EC" id="3.5.5.8"/>
    </reaction>
</comment>
<comment type="cofactor">
    <cofactor evidence="1 2">
        <name>Co(3+)</name>
        <dbReference type="ChEBI" id="CHEBI:49415"/>
    </cofactor>
    <text evidence="1 2">Binds 1 Co(3+) ion per subunit.</text>
</comment>
<comment type="pathway">
    <text>Organosulfur degradation; thiocyanate degradation.</text>
</comment>
<comment type="subunit">
    <text evidence="2 3">Heterododecamer consisting of 4 alpha, 4 beta, and 4 gamma subunits.</text>
</comment>
<comment type="similarity">
    <text evidence="5">Belongs to the nitrile hydratase subunit alpha family.</text>
</comment>
<sequence>MSADHDHDHDHDHDHKPAPMVEEVSDFEILEMAVRELAIEKGLFSAEDHRVWKDYVHTLGPLPAARLVAKAWLDPEYKKLCIEDGVEASKAVGVNWVTSPPTQFGTPSDYCNLRVLADSPTLKHVVVCTLCSCYPRPILGQSPEWYRSPNYRRRLVRWPRQVLAEFGLQLPSEVQIRVADSNQKTRYIVMPVRPEGTDGWTEDQLAEIVTRDCLIGVAVPKPGITVNAKRPVLKANRPVHHDH</sequence>
<feature type="initiator methionine" description="Removed" evidence="4">
    <location>
        <position position="1"/>
    </location>
</feature>
<feature type="chain" id="PRO_0000186827" description="Thiocyanate hydrolase subunit gamma">
    <location>
        <begin position="2"/>
        <end position="243"/>
    </location>
</feature>
<feature type="binding site" evidence="6">
    <location>
        <position position="128"/>
    </location>
    <ligand>
        <name>Co(3+)</name>
        <dbReference type="ChEBI" id="CHEBI:49415"/>
    </ligand>
</feature>
<feature type="binding site" evidence="6">
    <location>
        <position position="131"/>
    </location>
    <ligand>
        <name>Co(3+)</name>
        <dbReference type="ChEBI" id="CHEBI:49415"/>
    </ligand>
</feature>
<feature type="binding site" evidence="6">
    <location>
        <position position="132"/>
    </location>
    <ligand>
        <name>Co(3+)</name>
        <dbReference type="ChEBI" id="CHEBI:49415"/>
    </ligand>
</feature>
<feature type="binding site" evidence="6">
    <location>
        <position position="133"/>
    </location>
    <ligand>
        <name>Co(3+)</name>
        <dbReference type="ChEBI" id="CHEBI:49415"/>
    </ligand>
</feature>
<feature type="modified residue" description="Cysteine sulfinic acid (-SO2H)" evidence="1 2 3">
    <location>
        <position position="131"/>
    </location>
</feature>
<feature type="modified residue" description="Cysteine sulfenic acid (-SOH)" evidence="2 3">
    <location>
        <position position="133"/>
    </location>
</feature>
<feature type="sequence conflict" description="In Ref. 1; AA sequence." evidence="5" ref="1">
    <original>HDH</original>
    <variation>KPA</variation>
    <location>
        <begin position="13"/>
        <end position="15"/>
    </location>
</feature>
<feature type="helix" evidence="7">
    <location>
        <begin position="26"/>
        <end position="40"/>
    </location>
</feature>
<feature type="helix" evidence="7">
    <location>
        <begin position="46"/>
        <end position="58"/>
    </location>
</feature>
<feature type="helix" evidence="7">
    <location>
        <begin position="62"/>
        <end position="73"/>
    </location>
</feature>
<feature type="helix" evidence="7">
    <location>
        <begin position="75"/>
        <end position="83"/>
    </location>
</feature>
<feature type="helix" evidence="7">
    <location>
        <begin position="85"/>
        <end position="89"/>
    </location>
</feature>
<feature type="helix" evidence="7">
    <location>
        <begin position="90"/>
        <end position="92"/>
    </location>
</feature>
<feature type="turn" evidence="7">
    <location>
        <begin position="96"/>
        <end position="98"/>
    </location>
</feature>
<feature type="turn" evidence="7">
    <location>
        <begin position="107"/>
        <end position="109"/>
    </location>
</feature>
<feature type="strand" evidence="7">
    <location>
        <begin position="113"/>
        <end position="117"/>
    </location>
</feature>
<feature type="strand" evidence="7">
    <location>
        <begin position="122"/>
        <end position="127"/>
    </location>
</feature>
<feature type="helix" evidence="7">
    <location>
        <begin position="136"/>
        <end position="139"/>
    </location>
</feature>
<feature type="helix" evidence="7">
    <location>
        <begin position="145"/>
        <end position="147"/>
    </location>
</feature>
<feature type="helix" evidence="7">
    <location>
        <begin position="149"/>
        <end position="154"/>
    </location>
</feature>
<feature type="turn" evidence="7">
    <location>
        <begin position="155"/>
        <end position="157"/>
    </location>
</feature>
<feature type="helix" evidence="7">
    <location>
        <begin position="159"/>
        <end position="165"/>
    </location>
</feature>
<feature type="strand" evidence="7">
    <location>
        <begin position="174"/>
        <end position="180"/>
    </location>
</feature>
<feature type="strand" evidence="7">
    <location>
        <begin position="186"/>
        <end position="190"/>
    </location>
</feature>
<feature type="helix" evidence="7">
    <location>
        <begin position="202"/>
        <end position="207"/>
    </location>
</feature>
<feature type="helix" evidence="7">
    <location>
        <begin position="211"/>
        <end position="215"/>
    </location>
</feature>
<feature type="strand" evidence="7">
    <location>
        <begin position="236"/>
        <end position="238"/>
    </location>
</feature>
<gene>
    <name type="primary">scnC</name>
</gene>